<dbReference type="EMBL" id="CP001581">
    <property type="protein sequence ID" value="ACO83907.1"/>
    <property type="molecule type" value="Genomic_DNA"/>
</dbReference>
<dbReference type="RefSeq" id="WP_012703944.1">
    <property type="nucleotide sequence ID" value="NC_012563.1"/>
</dbReference>
<dbReference type="SMR" id="C1FSL0"/>
<dbReference type="KEGG" id="cby:CLM_2733"/>
<dbReference type="eggNOG" id="COG0792">
    <property type="taxonomic scope" value="Bacteria"/>
</dbReference>
<dbReference type="HOGENOM" id="CLU_115353_2_1_9"/>
<dbReference type="Proteomes" id="UP000001374">
    <property type="component" value="Chromosome"/>
</dbReference>
<dbReference type="GO" id="GO:0003676">
    <property type="term" value="F:nucleic acid binding"/>
    <property type="evidence" value="ECO:0007669"/>
    <property type="project" value="InterPro"/>
</dbReference>
<dbReference type="CDD" id="cd20736">
    <property type="entry name" value="PoNe_Nuclease"/>
    <property type="match status" value="1"/>
</dbReference>
<dbReference type="Gene3D" id="3.40.1350.10">
    <property type="match status" value="1"/>
</dbReference>
<dbReference type="HAMAP" id="MF_00048">
    <property type="entry name" value="UPF0102"/>
    <property type="match status" value="1"/>
</dbReference>
<dbReference type="InterPro" id="IPR011335">
    <property type="entry name" value="Restrct_endonuc-II-like"/>
</dbReference>
<dbReference type="InterPro" id="IPR011856">
    <property type="entry name" value="tRNA_endonuc-like_dom_sf"/>
</dbReference>
<dbReference type="InterPro" id="IPR003509">
    <property type="entry name" value="UPF0102_YraN-like"/>
</dbReference>
<dbReference type="NCBIfam" id="NF009150">
    <property type="entry name" value="PRK12497.1-3"/>
    <property type="match status" value="1"/>
</dbReference>
<dbReference type="NCBIfam" id="TIGR00252">
    <property type="entry name" value="YraN family protein"/>
    <property type="match status" value="1"/>
</dbReference>
<dbReference type="PANTHER" id="PTHR34039">
    <property type="entry name" value="UPF0102 PROTEIN YRAN"/>
    <property type="match status" value="1"/>
</dbReference>
<dbReference type="PANTHER" id="PTHR34039:SF1">
    <property type="entry name" value="UPF0102 PROTEIN YRAN"/>
    <property type="match status" value="1"/>
</dbReference>
<dbReference type="Pfam" id="PF02021">
    <property type="entry name" value="UPF0102"/>
    <property type="match status" value="1"/>
</dbReference>
<dbReference type="SUPFAM" id="SSF52980">
    <property type="entry name" value="Restriction endonuclease-like"/>
    <property type="match status" value="1"/>
</dbReference>
<sequence length="123" mass="14486">MHYCNKDIGSFGETIAVDYIKNCGYIILEKNFRCKLGEIDIIAKDKNFIVFIEVKTRYSYIYGSPSEAITFRKQNKIYKTAQLYIIKKAIHNKFYFRFDVIEVILNTLNSNYSVKLIKNAFQI</sequence>
<proteinExistence type="inferred from homology"/>
<organism>
    <name type="scientific">Clostridium botulinum (strain Kyoto / Type A2)</name>
    <dbReference type="NCBI Taxonomy" id="536232"/>
    <lineage>
        <taxon>Bacteria</taxon>
        <taxon>Bacillati</taxon>
        <taxon>Bacillota</taxon>
        <taxon>Clostridia</taxon>
        <taxon>Eubacteriales</taxon>
        <taxon>Clostridiaceae</taxon>
        <taxon>Clostridium</taxon>
    </lineage>
</organism>
<comment type="similarity">
    <text evidence="1">Belongs to the UPF0102 family.</text>
</comment>
<reference key="1">
    <citation type="submission" date="2008-10" db="EMBL/GenBank/DDBJ databases">
        <title>Genome sequence of Clostridium botulinum A2 Kyoto.</title>
        <authorList>
            <person name="Shrivastava S."/>
            <person name="Brinkac L.M."/>
            <person name="Brown J.L."/>
            <person name="Bruce D."/>
            <person name="Detter C.C."/>
            <person name="Johnson E.A."/>
            <person name="Munk C.A."/>
            <person name="Smith L.A."/>
            <person name="Smith T.J."/>
            <person name="Sutton G."/>
            <person name="Brettin T.S."/>
        </authorList>
    </citation>
    <scope>NUCLEOTIDE SEQUENCE [LARGE SCALE GENOMIC DNA]</scope>
    <source>
        <strain>Kyoto / Type A2</strain>
    </source>
</reference>
<name>Y2733_CLOBJ</name>
<gene>
    <name type="ordered locus">CLM_2733</name>
</gene>
<accession>C1FSL0</accession>
<evidence type="ECO:0000255" key="1">
    <source>
        <dbReference type="HAMAP-Rule" id="MF_00048"/>
    </source>
</evidence>
<protein>
    <recommendedName>
        <fullName evidence="1">UPF0102 protein CLM_2733</fullName>
    </recommendedName>
</protein>
<feature type="chain" id="PRO_1000200133" description="UPF0102 protein CLM_2733">
    <location>
        <begin position="1"/>
        <end position="123"/>
    </location>
</feature>